<dbReference type="EMBL" id="FM204884">
    <property type="protein sequence ID" value="CAX00474.1"/>
    <property type="molecule type" value="Genomic_DNA"/>
</dbReference>
<dbReference type="SMR" id="C0MF25"/>
<dbReference type="KEGG" id="seq:SZO_16890"/>
<dbReference type="eggNOG" id="COG0480">
    <property type="taxonomic scope" value="Bacteria"/>
</dbReference>
<dbReference type="HOGENOM" id="CLU_002794_4_1_9"/>
<dbReference type="Proteomes" id="UP000001368">
    <property type="component" value="Chromosome"/>
</dbReference>
<dbReference type="GO" id="GO:0005737">
    <property type="term" value="C:cytoplasm"/>
    <property type="evidence" value="ECO:0007669"/>
    <property type="project" value="UniProtKB-SubCell"/>
</dbReference>
<dbReference type="GO" id="GO:0005525">
    <property type="term" value="F:GTP binding"/>
    <property type="evidence" value="ECO:0007669"/>
    <property type="project" value="UniProtKB-UniRule"/>
</dbReference>
<dbReference type="GO" id="GO:0003924">
    <property type="term" value="F:GTPase activity"/>
    <property type="evidence" value="ECO:0007669"/>
    <property type="project" value="InterPro"/>
</dbReference>
<dbReference type="GO" id="GO:0003746">
    <property type="term" value="F:translation elongation factor activity"/>
    <property type="evidence" value="ECO:0007669"/>
    <property type="project" value="UniProtKB-UniRule"/>
</dbReference>
<dbReference type="GO" id="GO:0032790">
    <property type="term" value="P:ribosome disassembly"/>
    <property type="evidence" value="ECO:0007669"/>
    <property type="project" value="TreeGrafter"/>
</dbReference>
<dbReference type="CDD" id="cd01886">
    <property type="entry name" value="EF-G"/>
    <property type="match status" value="1"/>
</dbReference>
<dbReference type="CDD" id="cd16262">
    <property type="entry name" value="EFG_III"/>
    <property type="match status" value="1"/>
</dbReference>
<dbReference type="CDD" id="cd01434">
    <property type="entry name" value="EFG_mtEFG1_IV"/>
    <property type="match status" value="1"/>
</dbReference>
<dbReference type="CDD" id="cd03713">
    <property type="entry name" value="EFG_mtEFG_C"/>
    <property type="match status" value="1"/>
</dbReference>
<dbReference type="CDD" id="cd04088">
    <property type="entry name" value="EFG_mtEFG_II"/>
    <property type="match status" value="1"/>
</dbReference>
<dbReference type="FunFam" id="2.40.30.10:FF:000006">
    <property type="entry name" value="Elongation factor G"/>
    <property type="match status" value="1"/>
</dbReference>
<dbReference type="FunFam" id="3.30.230.10:FF:000003">
    <property type="entry name" value="Elongation factor G"/>
    <property type="match status" value="1"/>
</dbReference>
<dbReference type="FunFam" id="3.30.70.240:FF:000001">
    <property type="entry name" value="Elongation factor G"/>
    <property type="match status" value="1"/>
</dbReference>
<dbReference type="FunFam" id="3.30.70.870:FF:000001">
    <property type="entry name" value="Elongation factor G"/>
    <property type="match status" value="1"/>
</dbReference>
<dbReference type="FunFam" id="3.40.50.300:FF:000029">
    <property type="entry name" value="Elongation factor G"/>
    <property type="match status" value="1"/>
</dbReference>
<dbReference type="Gene3D" id="3.30.230.10">
    <property type="match status" value="1"/>
</dbReference>
<dbReference type="Gene3D" id="3.30.70.240">
    <property type="match status" value="1"/>
</dbReference>
<dbReference type="Gene3D" id="3.30.70.870">
    <property type="entry name" value="Elongation Factor G (Translational Gtpase), domain 3"/>
    <property type="match status" value="1"/>
</dbReference>
<dbReference type="Gene3D" id="3.40.50.300">
    <property type="entry name" value="P-loop containing nucleotide triphosphate hydrolases"/>
    <property type="match status" value="1"/>
</dbReference>
<dbReference type="Gene3D" id="2.40.30.10">
    <property type="entry name" value="Translation factors"/>
    <property type="match status" value="1"/>
</dbReference>
<dbReference type="HAMAP" id="MF_00054_B">
    <property type="entry name" value="EF_G_EF_2_B"/>
    <property type="match status" value="1"/>
</dbReference>
<dbReference type="InterPro" id="IPR041095">
    <property type="entry name" value="EFG_II"/>
</dbReference>
<dbReference type="InterPro" id="IPR009022">
    <property type="entry name" value="EFG_III"/>
</dbReference>
<dbReference type="InterPro" id="IPR035647">
    <property type="entry name" value="EFG_III/V"/>
</dbReference>
<dbReference type="InterPro" id="IPR047872">
    <property type="entry name" value="EFG_IV"/>
</dbReference>
<dbReference type="InterPro" id="IPR035649">
    <property type="entry name" value="EFG_V"/>
</dbReference>
<dbReference type="InterPro" id="IPR000640">
    <property type="entry name" value="EFG_V-like"/>
</dbReference>
<dbReference type="InterPro" id="IPR004161">
    <property type="entry name" value="EFTu-like_2"/>
</dbReference>
<dbReference type="InterPro" id="IPR031157">
    <property type="entry name" value="G_TR_CS"/>
</dbReference>
<dbReference type="InterPro" id="IPR027417">
    <property type="entry name" value="P-loop_NTPase"/>
</dbReference>
<dbReference type="InterPro" id="IPR020568">
    <property type="entry name" value="Ribosomal_Su5_D2-typ_SF"/>
</dbReference>
<dbReference type="InterPro" id="IPR014721">
    <property type="entry name" value="Ribsml_uS5_D2-typ_fold_subgr"/>
</dbReference>
<dbReference type="InterPro" id="IPR005225">
    <property type="entry name" value="Small_GTP-bd"/>
</dbReference>
<dbReference type="InterPro" id="IPR000795">
    <property type="entry name" value="T_Tr_GTP-bd_dom"/>
</dbReference>
<dbReference type="InterPro" id="IPR009000">
    <property type="entry name" value="Transl_B-barrel_sf"/>
</dbReference>
<dbReference type="InterPro" id="IPR004540">
    <property type="entry name" value="Transl_elong_EFG/EF2"/>
</dbReference>
<dbReference type="InterPro" id="IPR005517">
    <property type="entry name" value="Transl_elong_EFG/EF2_IV"/>
</dbReference>
<dbReference type="NCBIfam" id="TIGR00484">
    <property type="entry name" value="EF-G"/>
    <property type="match status" value="1"/>
</dbReference>
<dbReference type="NCBIfam" id="NF009379">
    <property type="entry name" value="PRK12740.1-3"/>
    <property type="match status" value="1"/>
</dbReference>
<dbReference type="NCBIfam" id="NF009381">
    <property type="entry name" value="PRK12740.1-5"/>
    <property type="match status" value="1"/>
</dbReference>
<dbReference type="NCBIfam" id="TIGR00231">
    <property type="entry name" value="small_GTP"/>
    <property type="match status" value="1"/>
</dbReference>
<dbReference type="PANTHER" id="PTHR43261:SF1">
    <property type="entry name" value="RIBOSOME-RELEASING FACTOR 2, MITOCHONDRIAL"/>
    <property type="match status" value="1"/>
</dbReference>
<dbReference type="PANTHER" id="PTHR43261">
    <property type="entry name" value="TRANSLATION ELONGATION FACTOR G-RELATED"/>
    <property type="match status" value="1"/>
</dbReference>
<dbReference type="Pfam" id="PF00679">
    <property type="entry name" value="EFG_C"/>
    <property type="match status" value="1"/>
</dbReference>
<dbReference type="Pfam" id="PF14492">
    <property type="entry name" value="EFG_III"/>
    <property type="match status" value="1"/>
</dbReference>
<dbReference type="Pfam" id="PF03764">
    <property type="entry name" value="EFG_IV"/>
    <property type="match status" value="1"/>
</dbReference>
<dbReference type="Pfam" id="PF00009">
    <property type="entry name" value="GTP_EFTU"/>
    <property type="match status" value="1"/>
</dbReference>
<dbReference type="Pfam" id="PF03144">
    <property type="entry name" value="GTP_EFTU_D2"/>
    <property type="match status" value="1"/>
</dbReference>
<dbReference type="PRINTS" id="PR00315">
    <property type="entry name" value="ELONGATNFCT"/>
</dbReference>
<dbReference type="SMART" id="SM00838">
    <property type="entry name" value="EFG_C"/>
    <property type="match status" value="1"/>
</dbReference>
<dbReference type="SMART" id="SM00889">
    <property type="entry name" value="EFG_IV"/>
    <property type="match status" value="1"/>
</dbReference>
<dbReference type="SUPFAM" id="SSF54980">
    <property type="entry name" value="EF-G C-terminal domain-like"/>
    <property type="match status" value="2"/>
</dbReference>
<dbReference type="SUPFAM" id="SSF52540">
    <property type="entry name" value="P-loop containing nucleoside triphosphate hydrolases"/>
    <property type="match status" value="1"/>
</dbReference>
<dbReference type="SUPFAM" id="SSF54211">
    <property type="entry name" value="Ribosomal protein S5 domain 2-like"/>
    <property type="match status" value="1"/>
</dbReference>
<dbReference type="SUPFAM" id="SSF50447">
    <property type="entry name" value="Translation proteins"/>
    <property type="match status" value="1"/>
</dbReference>
<dbReference type="PROSITE" id="PS00301">
    <property type="entry name" value="G_TR_1"/>
    <property type="match status" value="1"/>
</dbReference>
<dbReference type="PROSITE" id="PS51722">
    <property type="entry name" value="G_TR_2"/>
    <property type="match status" value="1"/>
</dbReference>
<gene>
    <name evidence="1" type="primary">fusA</name>
    <name type="ordered locus">SZO_16890</name>
</gene>
<evidence type="ECO:0000255" key="1">
    <source>
        <dbReference type="HAMAP-Rule" id="MF_00054"/>
    </source>
</evidence>
<protein>
    <recommendedName>
        <fullName evidence="1">Elongation factor G</fullName>
        <shortName evidence="1">EF-G</shortName>
    </recommendedName>
</protein>
<proteinExistence type="inferred from homology"/>
<reference key="1">
    <citation type="journal article" date="2009" name="PLoS Pathog.">
        <title>Genomic evidence for the evolution of Streptococcus equi: host restriction, increased virulence, and genetic exchange with human pathogens.</title>
        <authorList>
            <person name="Holden M.T.G."/>
            <person name="Heather Z."/>
            <person name="Paillot R."/>
            <person name="Steward K.F."/>
            <person name="Webb K."/>
            <person name="Ainslie F."/>
            <person name="Jourdan T."/>
            <person name="Bason N.C."/>
            <person name="Holroyd N.E."/>
            <person name="Mungall K."/>
            <person name="Quail M.A."/>
            <person name="Sanders M."/>
            <person name="Simmonds M."/>
            <person name="Willey D."/>
            <person name="Brooks K."/>
            <person name="Aanensen D.M."/>
            <person name="Spratt B.G."/>
            <person name="Jolley K.A."/>
            <person name="Maiden M.C.J."/>
            <person name="Kehoe M."/>
            <person name="Chanter N."/>
            <person name="Bentley S.D."/>
            <person name="Robinson C."/>
            <person name="Maskell D.J."/>
            <person name="Parkhill J."/>
            <person name="Waller A.S."/>
        </authorList>
    </citation>
    <scope>NUCLEOTIDE SEQUENCE [LARGE SCALE GENOMIC DNA]</scope>
    <source>
        <strain>H70</strain>
    </source>
</reference>
<accession>C0MF25</accession>
<feature type="chain" id="PRO_1000202312" description="Elongation factor G">
    <location>
        <begin position="1"/>
        <end position="692"/>
    </location>
</feature>
<feature type="domain" description="tr-type G">
    <location>
        <begin position="8"/>
        <end position="282"/>
    </location>
</feature>
<feature type="binding site" evidence="1">
    <location>
        <begin position="17"/>
        <end position="24"/>
    </location>
    <ligand>
        <name>GTP</name>
        <dbReference type="ChEBI" id="CHEBI:37565"/>
    </ligand>
</feature>
<feature type="binding site" evidence="1">
    <location>
        <begin position="81"/>
        <end position="85"/>
    </location>
    <ligand>
        <name>GTP</name>
        <dbReference type="ChEBI" id="CHEBI:37565"/>
    </ligand>
</feature>
<feature type="binding site" evidence="1">
    <location>
        <begin position="135"/>
        <end position="138"/>
    </location>
    <ligand>
        <name>GTP</name>
        <dbReference type="ChEBI" id="CHEBI:37565"/>
    </ligand>
</feature>
<sequence>MAREFSLAKTRNIGIMAHVDAGKTTTTERILYYTGKIHKIGETHEGASQMDWMEQEQERGITITSAATTAQWDGHRVNIIDTPGHVDFTIEVQRSLRVLDGAVTVLDSQSGVEPQTETVWRQATEYGVPRIVFANKMDKIGADFLYSVQTLHDRLQANAHPIQLPIGSEDDFRGIIDLIKMKAEIYTNDLGTDILEEDIPEEYLEQAQEYREKLIEAVAETDEDLMMKYLEGEEITNEELVAGIRKATINVEFFPVLCGSAFKNKGVQLMLDAVIAYLPSPLDIPAIKGVNPDTDAEEERPASDEEPFAALAFKIMTDPFVGRLTFFRVYSGVLNSGSYVMNTSKGKRERIGRILQMHANSRQEIETVYAGDIAAAVGLKDTTTGDSLTDEKAKIILESIEVPEPVIQLMVEPKSKADQDKMGIALQKLAEEDPTFRVETNVETGETVIAGMGELHLDVLVDRMRREFKVEANVGAPQVSYRETFRASTQARGFFKRQSGGKGQFGDVWIEFTPNEEGKGFEFENAIVGGVVPREFIPAVEKGLIESMANGVLAGYPMVDVKAKLYDGSYHDVDSSETAFKIAASLALKEAAKTAQPAILEPMMLVTITAPEDNLGDVMGHVTARRGRVDGMEAHGTSQIVRAYVPLAEMFGYATVLRSATQGRGTFMMVFDHYEDVPKSVQEEIIKKNKGE</sequence>
<organism>
    <name type="scientific">Streptococcus equi subsp. zooepidemicus (strain H70)</name>
    <dbReference type="NCBI Taxonomy" id="553483"/>
    <lineage>
        <taxon>Bacteria</taxon>
        <taxon>Bacillati</taxon>
        <taxon>Bacillota</taxon>
        <taxon>Bacilli</taxon>
        <taxon>Lactobacillales</taxon>
        <taxon>Streptococcaceae</taxon>
        <taxon>Streptococcus</taxon>
    </lineage>
</organism>
<keyword id="KW-0963">Cytoplasm</keyword>
<keyword id="KW-0251">Elongation factor</keyword>
<keyword id="KW-0342">GTP-binding</keyword>
<keyword id="KW-0547">Nucleotide-binding</keyword>
<keyword id="KW-0648">Protein biosynthesis</keyword>
<name>EFG_STRS7</name>
<comment type="function">
    <text evidence="1">Catalyzes the GTP-dependent ribosomal translocation step during translation elongation. During this step, the ribosome changes from the pre-translocational (PRE) to the post-translocational (POST) state as the newly formed A-site-bound peptidyl-tRNA and P-site-bound deacylated tRNA move to the P and E sites, respectively. Catalyzes the coordinated movement of the two tRNA molecules, the mRNA and conformational changes in the ribosome.</text>
</comment>
<comment type="subcellular location">
    <subcellularLocation>
        <location evidence="1">Cytoplasm</location>
    </subcellularLocation>
</comment>
<comment type="similarity">
    <text evidence="1">Belongs to the TRAFAC class translation factor GTPase superfamily. Classic translation factor GTPase family. EF-G/EF-2 subfamily.</text>
</comment>